<reference key="1">
    <citation type="submission" date="2008-10" db="EMBL/GenBank/DDBJ databases">
        <title>Genome sequence of Bacillus cereus AH820.</title>
        <authorList>
            <person name="Dodson R.J."/>
            <person name="Durkin A.S."/>
            <person name="Rosovitz M.J."/>
            <person name="Rasko D.A."/>
            <person name="Hoffmaster A."/>
            <person name="Ravel J."/>
            <person name="Sutton G."/>
        </authorList>
    </citation>
    <scope>NUCLEOTIDE SEQUENCE [LARGE SCALE GENOMIC DNA]</scope>
    <source>
        <strain>AH820</strain>
    </source>
</reference>
<organism>
    <name type="scientific">Bacillus cereus (strain AH820)</name>
    <dbReference type="NCBI Taxonomy" id="405535"/>
    <lineage>
        <taxon>Bacteria</taxon>
        <taxon>Bacillati</taxon>
        <taxon>Bacillota</taxon>
        <taxon>Bacilli</taxon>
        <taxon>Bacillales</taxon>
        <taxon>Bacillaceae</taxon>
        <taxon>Bacillus</taxon>
        <taxon>Bacillus cereus group</taxon>
    </lineage>
</organism>
<accession>B7JJX6</accession>
<keyword id="KW-0665">Pyrimidine biosynthesis</keyword>
<keyword id="KW-0808">Transferase</keyword>
<name>PYRB_BACC0</name>
<feature type="chain" id="PRO_1000191900" description="Aspartate carbamoyltransferase catalytic subunit">
    <location>
        <begin position="1"/>
        <end position="304"/>
    </location>
</feature>
<feature type="binding site" evidence="1">
    <location>
        <position position="49"/>
    </location>
    <ligand>
        <name>carbamoyl phosphate</name>
        <dbReference type="ChEBI" id="CHEBI:58228"/>
    </ligand>
</feature>
<feature type="binding site" evidence="1">
    <location>
        <position position="50"/>
    </location>
    <ligand>
        <name>carbamoyl phosphate</name>
        <dbReference type="ChEBI" id="CHEBI:58228"/>
    </ligand>
</feature>
<feature type="binding site" evidence="1">
    <location>
        <position position="77"/>
    </location>
    <ligand>
        <name>L-aspartate</name>
        <dbReference type="ChEBI" id="CHEBI:29991"/>
    </ligand>
</feature>
<feature type="binding site" evidence="1">
    <location>
        <position position="99"/>
    </location>
    <ligand>
        <name>carbamoyl phosphate</name>
        <dbReference type="ChEBI" id="CHEBI:58228"/>
    </ligand>
</feature>
<feature type="binding site" evidence="1">
    <location>
        <position position="127"/>
    </location>
    <ligand>
        <name>carbamoyl phosphate</name>
        <dbReference type="ChEBI" id="CHEBI:58228"/>
    </ligand>
</feature>
<feature type="binding site" evidence="1">
    <location>
        <position position="130"/>
    </location>
    <ligand>
        <name>carbamoyl phosphate</name>
        <dbReference type="ChEBI" id="CHEBI:58228"/>
    </ligand>
</feature>
<feature type="binding site" evidence="1">
    <location>
        <position position="160"/>
    </location>
    <ligand>
        <name>L-aspartate</name>
        <dbReference type="ChEBI" id="CHEBI:29991"/>
    </ligand>
</feature>
<feature type="binding site" evidence="1">
    <location>
        <position position="211"/>
    </location>
    <ligand>
        <name>L-aspartate</name>
        <dbReference type="ChEBI" id="CHEBI:29991"/>
    </ligand>
</feature>
<feature type="binding site" evidence="1">
    <location>
        <position position="252"/>
    </location>
    <ligand>
        <name>carbamoyl phosphate</name>
        <dbReference type="ChEBI" id="CHEBI:58228"/>
    </ligand>
</feature>
<feature type="binding site" evidence="1">
    <location>
        <position position="253"/>
    </location>
    <ligand>
        <name>carbamoyl phosphate</name>
        <dbReference type="ChEBI" id="CHEBI:58228"/>
    </ligand>
</feature>
<evidence type="ECO:0000255" key="1">
    <source>
        <dbReference type="HAMAP-Rule" id="MF_00001"/>
    </source>
</evidence>
<protein>
    <recommendedName>
        <fullName evidence="1">Aspartate carbamoyltransferase catalytic subunit</fullName>
        <ecNumber evidence="1">2.1.3.2</ecNumber>
    </recommendedName>
    <alternativeName>
        <fullName evidence="1">Aspartate transcarbamylase</fullName>
        <shortName evidence="1">ATCase</shortName>
    </alternativeName>
</protein>
<dbReference type="EC" id="2.1.3.2" evidence="1"/>
<dbReference type="EMBL" id="CP001283">
    <property type="protein sequence ID" value="ACK89748.1"/>
    <property type="molecule type" value="Genomic_DNA"/>
</dbReference>
<dbReference type="RefSeq" id="WP_000018849.1">
    <property type="nucleotide sequence ID" value="NC_011773.1"/>
</dbReference>
<dbReference type="SMR" id="B7JJX6"/>
<dbReference type="GeneID" id="75087026"/>
<dbReference type="KEGG" id="bcu:BCAH820_3903"/>
<dbReference type="HOGENOM" id="CLU_043846_2_1_9"/>
<dbReference type="UniPathway" id="UPA00070">
    <property type="reaction ID" value="UER00116"/>
</dbReference>
<dbReference type="Proteomes" id="UP000001363">
    <property type="component" value="Chromosome"/>
</dbReference>
<dbReference type="GO" id="GO:0005829">
    <property type="term" value="C:cytosol"/>
    <property type="evidence" value="ECO:0007669"/>
    <property type="project" value="TreeGrafter"/>
</dbReference>
<dbReference type="GO" id="GO:0016597">
    <property type="term" value="F:amino acid binding"/>
    <property type="evidence" value="ECO:0007669"/>
    <property type="project" value="InterPro"/>
</dbReference>
<dbReference type="GO" id="GO:0004070">
    <property type="term" value="F:aspartate carbamoyltransferase activity"/>
    <property type="evidence" value="ECO:0007669"/>
    <property type="project" value="UniProtKB-UniRule"/>
</dbReference>
<dbReference type="GO" id="GO:0006207">
    <property type="term" value="P:'de novo' pyrimidine nucleobase biosynthetic process"/>
    <property type="evidence" value="ECO:0007669"/>
    <property type="project" value="InterPro"/>
</dbReference>
<dbReference type="GO" id="GO:0044205">
    <property type="term" value="P:'de novo' UMP biosynthetic process"/>
    <property type="evidence" value="ECO:0007669"/>
    <property type="project" value="UniProtKB-UniRule"/>
</dbReference>
<dbReference type="GO" id="GO:0006520">
    <property type="term" value="P:amino acid metabolic process"/>
    <property type="evidence" value="ECO:0007669"/>
    <property type="project" value="InterPro"/>
</dbReference>
<dbReference type="FunFam" id="3.40.50.1370:FF:000001">
    <property type="entry name" value="Aspartate carbamoyltransferase"/>
    <property type="match status" value="1"/>
</dbReference>
<dbReference type="FunFam" id="3.40.50.1370:FF:000011">
    <property type="entry name" value="Aspartate carbamoyltransferase"/>
    <property type="match status" value="1"/>
</dbReference>
<dbReference type="Gene3D" id="3.40.50.1370">
    <property type="entry name" value="Aspartate/ornithine carbamoyltransferase"/>
    <property type="match status" value="2"/>
</dbReference>
<dbReference type="HAMAP" id="MF_00001">
    <property type="entry name" value="Asp_carb_tr"/>
    <property type="match status" value="1"/>
</dbReference>
<dbReference type="InterPro" id="IPR006132">
    <property type="entry name" value="Asp/Orn_carbamoyltranf_P-bd"/>
</dbReference>
<dbReference type="InterPro" id="IPR006130">
    <property type="entry name" value="Asp/Orn_carbamoylTrfase"/>
</dbReference>
<dbReference type="InterPro" id="IPR036901">
    <property type="entry name" value="Asp/Orn_carbamoylTrfase_sf"/>
</dbReference>
<dbReference type="InterPro" id="IPR002082">
    <property type="entry name" value="Asp_carbamoyltransf"/>
</dbReference>
<dbReference type="InterPro" id="IPR006131">
    <property type="entry name" value="Asp_carbamoyltransf_Asp/Orn-bd"/>
</dbReference>
<dbReference type="NCBIfam" id="TIGR00670">
    <property type="entry name" value="asp_carb_tr"/>
    <property type="match status" value="1"/>
</dbReference>
<dbReference type="NCBIfam" id="NF002032">
    <property type="entry name" value="PRK00856.1"/>
    <property type="match status" value="1"/>
</dbReference>
<dbReference type="PANTHER" id="PTHR45753:SF6">
    <property type="entry name" value="ASPARTATE CARBAMOYLTRANSFERASE"/>
    <property type="match status" value="1"/>
</dbReference>
<dbReference type="PANTHER" id="PTHR45753">
    <property type="entry name" value="ORNITHINE CARBAMOYLTRANSFERASE, MITOCHONDRIAL"/>
    <property type="match status" value="1"/>
</dbReference>
<dbReference type="Pfam" id="PF00185">
    <property type="entry name" value="OTCace"/>
    <property type="match status" value="1"/>
</dbReference>
<dbReference type="Pfam" id="PF02729">
    <property type="entry name" value="OTCace_N"/>
    <property type="match status" value="1"/>
</dbReference>
<dbReference type="PRINTS" id="PR00100">
    <property type="entry name" value="AOTCASE"/>
</dbReference>
<dbReference type="PRINTS" id="PR00101">
    <property type="entry name" value="ATCASE"/>
</dbReference>
<dbReference type="SUPFAM" id="SSF53671">
    <property type="entry name" value="Aspartate/ornithine carbamoyltransferase"/>
    <property type="match status" value="1"/>
</dbReference>
<dbReference type="PROSITE" id="PS00097">
    <property type="entry name" value="CARBAMOYLTRANSFERASE"/>
    <property type="match status" value="1"/>
</dbReference>
<comment type="function">
    <text evidence="1">Catalyzes the condensation of carbamoyl phosphate and aspartate to form carbamoyl aspartate and inorganic phosphate, the committed step in the de novo pyrimidine nucleotide biosynthesis pathway.</text>
</comment>
<comment type="catalytic activity">
    <reaction evidence="1">
        <text>carbamoyl phosphate + L-aspartate = N-carbamoyl-L-aspartate + phosphate + H(+)</text>
        <dbReference type="Rhea" id="RHEA:20013"/>
        <dbReference type="ChEBI" id="CHEBI:15378"/>
        <dbReference type="ChEBI" id="CHEBI:29991"/>
        <dbReference type="ChEBI" id="CHEBI:32814"/>
        <dbReference type="ChEBI" id="CHEBI:43474"/>
        <dbReference type="ChEBI" id="CHEBI:58228"/>
        <dbReference type="EC" id="2.1.3.2"/>
    </reaction>
</comment>
<comment type="pathway">
    <text evidence="1">Pyrimidine metabolism; UMP biosynthesis via de novo pathway; (S)-dihydroorotate from bicarbonate: step 2/3.</text>
</comment>
<comment type="subunit">
    <text evidence="1">Heterododecamer (2C3:3R2) of six catalytic PyrB chains organized as two trimers (C3), and six regulatory PyrI chains organized as three dimers (R2).</text>
</comment>
<comment type="similarity">
    <text evidence="1">Belongs to the aspartate/ornithine carbamoyltransferase superfamily. ATCase family.</text>
</comment>
<sequence length="304" mass="34722">MSHLLTMSELSEVEISEILKDAEDFANGKESKTTEQTFVANLFFENSTRTRFSFEVAEKRLGLDVLNFSADASSVQKGETLYDTIRTLESIGTKAVVIRHEQDRYFDELKDQVNIPILNAGDGCGNHPTQCLLDLLTIKQEFGRFEGLKIAIVGDVRHSRVARSNAEALTKLGATIYFASPEEWKDEDNTFGTYKPLDELVPEVDVMMLLRVQHERHDHYETDIMKEYHEKHGLTVEREKRMKEGSIIMHPAPVNRDVEIASELVECERSRIFKQMENGVYVRMAVLKRALPNVLGGMKHELFV</sequence>
<proteinExistence type="inferred from homology"/>
<gene>
    <name evidence="1" type="primary">pyrB</name>
    <name type="ordered locus">BCAH820_3903</name>
</gene>